<name>GRPE_PSEP1</name>
<protein>
    <recommendedName>
        <fullName evidence="1">Protein GrpE</fullName>
    </recommendedName>
    <alternativeName>
        <fullName evidence="1">HSP-70 cofactor</fullName>
    </alternativeName>
</protein>
<keyword id="KW-0143">Chaperone</keyword>
<keyword id="KW-0963">Cytoplasm</keyword>
<keyword id="KW-0346">Stress response</keyword>
<proteinExistence type="inferred from homology"/>
<evidence type="ECO:0000255" key="1">
    <source>
        <dbReference type="HAMAP-Rule" id="MF_01151"/>
    </source>
</evidence>
<evidence type="ECO:0000256" key="2">
    <source>
        <dbReference type="SAM" id="MobiDB-lite"/>
    </source>
</evidence>
<feature type="chain" id="PRO_1000053625" description="Protein GrpE">
    <location>
        <begin position="1"/>
        <end position="185"/>
    </location>
</feature>
<feature type="region of interest" description="Disordered" evidence="2">
    <location>
        <begin position="1"/>
        <end position="22"/>
    </location>
</feature>
<feature type="compositionally biased region" description="Basic and acidic residues" evidence="2">
    <location>
        <begin position="1"/>
        <end position="12"/>
    </location>
</feature>
<gene>
    <name evidence="1" type="primary">grpE</name>
    <name type="ordered locus">Pput_4594</name>
</gene>
<sequence length="185" mass="20545">MADEQLNEKDLNVEETGAGNAADTRVLELEEQLAAAKDQALRAVADLQNVRRRAEQDVEKAHKFALEKFSSDLLPVIDSLELALAHSSAEDEHVKQIREGVELTLKMFQDTLKRYNLEAVDPHGQPFNPEHHQAMAMQENAEVEPNSVLNVFQKGYLLNGRLLRPAMVVVSKAPSAAQPSINEKA</sequence>
<accession>A5W9A4</accession>
<comment type="function">
    <text evidence="1">Participates actively in the response to hyperosmotic and heat shock by preventing the aggregation of stress-denatured proteins, in association with DnaK and GrpE. It is the nucleotide exchange factor for DnaK and may function as a thermosensor. Unfolded proteins bind initially to DnaJ; upon interaction with the DnaJ-bound protein, DnaK hydrolyzes its bound ATP, resulting in the formation of a stable complex. GrpE releases ADP from DnaK; ATP binding to DnaK triggers the release of the substrate protein, thus completing the reaction cycle. Several rounds of ATP-dependent interactions between DnaJ, DnaK and GrpE are required for fully efficient folding.</text>
</comment>
<comment type="subunit">
    <text evidence="1">Homodimer.</text>
</comment>
<comment type="subcellular location">
    <subcellularLocation>
        <location evidence="1">Cytoplasm</location>
    </subcellularLocation>
</comment>
<comment type="similarity">
    <text evidence="1">Belongs to the GrpE family.</text>
</comment>
<reference key="1">
    <citation type="submission" date="2007-05" db="EMBL/GenBank/DDBJ databases">
        <title>Complete sequence of Pseudomonas putida F1.</title>
        <authorList>
            <consortium name="US DOE Joint Genome Institute"/>
            <person name="Copeland A."/>
            <person name="Lucas S."/>
            <person name="Lapidus A."/>
            <person name="Barry K."/>
            <person name="Detter J.C."/>
            <person name="Glavina del Rio T."/>
            <person name="Hammon N."/>
            <person name="Israni S."/>
            <person name="Dalin E."/>
            <person name="Tice H."/>
            <person name="Pitluck S."/>
            <person name="Chain P."/>
            <person name="Malfatti S."/>
            <person name="Shin M."/>
            <person name="Vergez L."/>
            <person name="Schmutz J."/>
            <person name="Larimer F."/>
            <person name="Land M."/>
            <person name="Hauser L."/>
            <person name="Kyrpides N."/>
            <person name="Lykidis A."/>
            <person name="Parales R."/>
            <person name="Richardson P."/>
        </authorList>
    </citation>
    <scope>NUCLEOTIDE SEQUENCE [LARGE SCALE GENOMIC DNA]</scope>
    <source>
        <strain>ATCC 700007 / DSM 6899 / JCM 31910 / BCRC 17059 / LMG 24140 / F1</strain>
    </source>
</reference>
<organism>
    <name type="scientific">Pseudomonas putida (strain ATCC 700007 / DSM 6899 / JCM 31910 / BCRC 17059 / LMG 24140 / F1)</name>
    <dbReference type="NCBI Taxonomy" id="351746"/>
    <lineage>
        <taxon>Bacteria</taxon>
        <taxon>Pseudomonadati</taxon>
        <taxon>Pseudomonadota</taxon>
        <taxon>Gammaproteobacteria</taxon>
        <taxon>Pseudomonadales</taxon>
        <taxon>Pseudomonadaceae</taxon>
        <taxon>Pseudomonas</taxon>
    </lineage>
</organism>
<dbReference type="EMBL" id="CP000712">
    <property type="protein sequence ID" value="ABQ80714.1"/>
    <property type="molecule type" value="Genomic_DNA"/>
</dbReference>
<dbReference type="SMR" id="A5W9A4"/>
<dbReference type="KEGG" id="ppf:Pput_4594"/>
<dbReference type="eggNOG" id="COG0576">
    <property type="taxonomic scope" value="Bacteria"/>
</dbReference>
<dbReference type="HOGENOM" id="CLU_057217_6_0_6"/>
<dbReference type="GO" id="GO:0005829">
    <property type="term" value="C:cytosol"/>
    <property type="evidence" value="ECO:0007669"/>
    <property type="project" value="TreeGrafter"/>
</dbReference>
<dbReference type="GO" id="GO:0000774">
    <property type="term" value="F:adenyl-nucleotide exchange factor activity"/>
    <property type="evidence" value="ECO:0007669"/>
    <property type="project" value="InterPro"/>
</dbReference>
<dbReference type="GO" id="GO:0042803">
    <property type="term" value="F:protein homodimerization activity"/>
    <property type="evidence" value="ECO:0007669"/>
    <property type="project" value="InterPro"/>
</dbReference>
<dbReference type="GO" id="GO:0051087">
    <property type="term" value="F:protein-folding chaperone binding"/>
    <property type="evidence" value="ECO:0007669"/>
    <property type="project" value="InterPro"/>
</dbReference>
<dbReference type="GO" id="GO:0051082">
    <property type="term" value="F:unfolded protein binding"/>
    <property type="evidence" value="ECO:0007669"/>
    <property type="project" value="TreeGrafter"/>
</dbReference>
<dbReference type="GO" id="GO:0006457">
    <property type="term" value="P:protein folding"/>
    <property type="evidence" value="ECO:0007669"/>
    <property type="project" value="InterPro"/>
</dbReference>
<dbReference type="CDD" id="cd00446">
    <property type="entry name" value="GrpE"/>
    <property type="match status" value="1"/>
</dbReference>
<dbReference type="FunFam" id="2.30.22.10:FF:000001">
    <property type="entry name" value="Protein GrpE"/>
    <property type="match status" value="1"/>
</dbReference>
<dbReference type="Gene3D" id="3.90.20.20">
    <property type="match status" value="1"/>
</dbReference>
<dbReference type="Gene3D" id="2.30.22.10">
    <property type="entry name" value="Head domain of nucleotide exchange factor GrpE"/>
    <property type="match status" value="1"/>
</dbReference>
<dbReference type="HAMAP" id="MF_01151">
    <property type="entry name" value="GrpE"/>
    <property type="match status" value="1"/>
</dbReference>
<dbReference type="InterPro" id="IPR000740">
    <property type="entry name" value="GrpE"/>
</dbReference>
<dbReference type="InterPro" id="IPR013805">
    <property type="entry name" value="GrpE_coiled_coil"/>
</dbReference>
<dbReference type="InterPro" id="IPR009012">
    <property type="entry name" value="GrpE_head"/>
</dbReference>
<dbReference type="NCBIfam" id="NF010737">
    <property type="entry name" value="PRK14139.1"/>
    <property type="match status" value="1"/>
</dbReference>
<dbReference type="NCBIfam" id="NF010738">
    <property type="entry name" value="PRK14140.1"/>
    <property type="match status" value="1"/>
</dbReference>
<dbReference type="NCBIfam" id="NF010748">
    <property type="entry name" value="PRK14150.1"/>
    <property type="match status" value="1"/>
</dbReference>
<dbReference type="NCBIfam" id="NF010749">
    <property type="entry name" value="PRK14151.1"/>
    <property type="match status" value="1"/>
</dbReference>
<dbReference type="PANTHER" id="PTHR21237">
    <property type="entry name" value="GRPE PROTEIN"/>
    <property type="match status" value="1"/>
</dbReference>
<dbReference type="PANTHER" id="PTHR21237:SF23">
    <property type="entry name" value="GRPE PROTEIN HOMOLOG, MITOCHONDRIAL"/>
    <property type="match status" value="1"/>
</dbReference>
<dbReference type="Pfam" id="PF01025">
    <property type="entry name" value="GrpE"/>
    <property type="match status" value="1"/>
</dbReference>
<dbReference type="PRINTS" id="PR00773">
    <property type="entry name" value="GRPEPROTEIN"/>
</dbReference>
<dbReference type="SUPFAM" id="SSF58014">
    <property type="entry name" value="Coiled-coil domain of nucleotide exchange factor GrpE"/>
    <property type="match status" value="1"/>
</dbReference>
<dbReference type="SUPFAM" id="SSF51064">
    <property type="entry name" value="Head domain of nucleotide exchange factor GrpE"/>
    <property type="match status" value="1"/>
</dbReference>
<dbReference type="PROSITE" id="PS01071">
    <property type="entry name" value="GRPE"/>
    <property type="match status" value="1"/>
</dbReference>